<evidence type="ECO:0000269" key="1">
    <source>
    </source>
</evidence>
<evidence type="ECO:0000269" key="2">
    <source>
    </source>
</evidence>
<evidence type="ECO:0000269" key="3">
    <source>
    </source>
</evidence>
<evidence type="ECO:0000269" key="4">
    <source>
    </source>
</evidence>
<evidence type="ECO:0000303" key="5">
    <source>
    </source>
</evidence>
<evidence type="ECO:0000305" key="6"/>
<evidence type="ECO:0007744" key="7">
    <source>
        <dbReference type="PDB" id="6H3L"/>
    </source>
</evidence>
<evidence type="ECO:0007744" key="8">
    <source>
        <dbReference type="PDB" id="6H3N"/>
    </source>
</evidence>
<evidence type="ECO:0007829" key="9">
    <source>
        <dbReference type="PDB" id="4MTK"/>
    </source>
</evidence>
<evidence type="ECO:0007829" key="10">
    <source>
        <dbReference type="PDB" id="4UHV"/>
    </source>
</evidence>
<evidence type="ECO:0007829" key="11">
    <source>
        <dbReference type="PDB" id="6H3N"/>
    </source>
</evidence>
<proteinExistence type="evidence at protein level"/>
<sequence length="643" mass="72013">MQLTRLVQVDCPLGPDVLLLQRMEGREELGRLFAYELHLVSENPNLPLEQLLGKPMSLSLELPGGSRRFFHGIVARCSQVAGHGQFAGYQATLRPWPWLLTRTSDCRIFQNQSVPEIIKQVFRNLGFSDFEDALTRPYREWEYCVQYRETSFDFISRLMEQEGIYYWFRHEQKRHILVLSDAYGAHRSPGGYASVPYYPPTLGHRERDHFFDWQMAREVQPGSLTLNDYDFQRPGARLEVRSNIARPHAAADYPLYDYPGEYVQSQDGEQYARNRIEAIQAQHERVRLRGVVRGIGAGHLFRLSGYPRDDQNREYLVVGAEYRVVQELYETGSGGAGSQFESELDCIDASQSFRLLPQTPVPVVRGPQTAVVVGPKGEEIWTDQYGRVKVHFHWDRHDQSNENSSCWIRVSQAWAGKNWGSMQIPRIGQEVIVSFLEGDPDRPIITGRVYNAEQTVPYELPANATQSGMKSRSSKGGTPANFNEIRMEDKKGAEQLYIHAERNQDNLVENDASLSVGHDRNKSIGHDELARIGNNRTRAVKLNDTLLVGGAKSDSVTGTYLIEAGAQIRLVCGKSVVEFNADGTINISGSAFNLYASGNGNIDTGGRLDLNSGGASEVDAKGKGVQGTIDGQVQAMFPPPAKG</sequence>
<gene>
    <name evidence="5" type="primary">vgrG1a</name>
    <name type="ordered locus">PA0091</name>
</gene>
<dbReference type="EMBL" id="AE004091">
    <property type="protein sequence ID" value="AAG03481.1"/>
    <property type="molecule type" value="Genomic_DNA"/>
</dbReference>
<dbReference type="PIR" id="H83635">
    <property type="entry name" value="H83635"/>
</dbReference>
<dbReference type="RefSeq" id="WP_010895494.1">
    <property type="nucleotide sequence ID" value="NZ_QZGE01000015.1"/>
</dbReference>
<dbReference type="PDB" id="4MTK">
    <property type="method" value="X-ray"/>
    <property type="resolution" value="3.32 A"/>
    <property type="chains" value="A/B/C/D/E/F=1-643"/>
</dbReference>
<dbReference type="PDB" id="4UHV">
    <property type="method" value="X-ray"/>
    <property type="resolution" value="2.00 A"/>
    <property type="chains" value="A/B=1-643"/>
</dbReference>
<dbReference type="PDB" id="6H3L">
    <property type="method" value="EM"/>
    <property type="resolution" value="4.20 A"/>
    <property type="chains" value="A/B/C=1-643"/>
</dbReference>
<dbReference type="PDB" id="6H3N">
    <property type="method" value="EM"/>
    <property type="resolution" value="3.25 A"/>
    <property type="chains" value="A/B/C=1-643"/>
</dbReference>
<dbReference type="PDBsum" id="4MTK"/>
<dbReference type="PDBsum" id="4UHV"/>
<dbReference type="PDBsum" id="6H3L"/>
<dbReference type="PDBsum" id="6H3N"/>
<dbReference type="EMDB" id="EMD-0135"/>
<dbReference type="EMDB" id="EMD-0136"/>
<dbReference type="EMDB" id="EMD-3112"/>
<dbReference type="EMDB" id="EMD-3113"/>
<dbReference type="SMR" id="Q9I741"/>
<dbReference type="STRING" id="208964.PA0091"/>
<dbReference type="PaxDb" id="208964-PA0091"/>
<dbReference type="KEGG" id="pae:PA0091"/>
<dbReference type="PATRIC" id="fig|208964.12.peg.95"/>
<dbReference type="PseudoCAP" id="PA0091"/>
<dbReference type="HOGENOM" id="CLU_004121_3_0_6"/>
<dbReference type="InParanoid" id="Q9I741"/>
<dbReference type="OrthoDB" id="9762420at2"/>
<dbReference type="PhylomeDB" id="Q9I741"/>
<dbReference type="BioCyc" id="PAER208964:G1FZ6-93-MONOMER"/>
<dbReference type="EvolutionaryTrace" id="Q9I741"/>
<dbReference type="Proteomes" id="UP000002438">
    <property type="component" value="Chromosome"/>
</dbReference>
<dbReference type="GO" id="GO:0005576">
    <property type="term" value="C:extracellular region"/>
    <property type="evidence" value="ECO:0007669"/>
    <property type="project" value="UniProtKB-SubCell"/>
</dbReference>
<dbReference type="GO" id="GO:0033104">
    <property type="term" value="C:type VI protein secretion system complex"/>
    <property type="evidence" value="ECO:0000314"/>
    <property type="project" value="PseudoCAP"/>
</dbReference>
<dbReference type="GO" id="GO:0033103">
    <property type="term" value="P:protein secretion by the type VI secretion system"/>
    <property type="evidence" value="ECO:0000314"/>
    <property type="project" value="PseudoCAP"/>
</dbReference>
<dbReference type="FunFam" id="3.55.50.10:FF:000001">
    <property type="entry name" value="Actin cross-linking toxin VgrG1"/>
    <property type="match status" value="1"/>
</dbReference>
<dbReference type="FunFam" id="2.40.50.230:FF:000001">
    <property type="entry name" value="Type VI secretion protein VgrG"/>
    <property type="match status" value="1"/>
</dbReference>
<dbReference type="FunFam" id="4.10.220.110:FF:000001">
    <property type="entry name" value="VgrG1"/>
    <property type="match status" value="1"/>
</dbReference>
<dbReference type="Gene3D" id="2.30.110.50">
    <property type="match status" value="1"/>
</dbReference>
<dbReference type="Gene3D" id="4.10.220.110">
    <property type="match status" value="1"/>
</dbReference>
<dbReference type="Gene3D" id="3.55.50.10">
    <property type="entry name" value="Baseplate protein-like domains"/>
    <property type="match status" value="1"/>
</dbReference>
<dbReference type="Gene3D" id="2.40.50.230">
    <property type="entry name" value="Gp5 N-terminal domain"/>
    <property type="match status" value="1"/>
</dbReference>
<dbReference type="InterPro" id="IPR006531">
    <property type="entry name" value="Gp5/Vgr_OB"/>
</dbReference>
<dbReference type="InterPro" id="IPR054030">
    <property type="entry name" value="Gp5_Vgr_C"/>
</dbReference>
<dbReference type="InterPro" id="IPR017847">
    <property type="entry name" value="T6SS_RhsGE_Vgr_subset"/>
</dbReference>
<dbReference type="InterPro" id="IPR006533">
    <property type="entry name" value="T6SS_Vgr_RhsGE"/>
</dbReference>
<dbReference type="InterPro" id="IPR050708">
    <property type="entry name" value="T6SS_VgrG/RHS"/>
</dbReference>
<dbReference type="InterPro" id="IPR037026">
    <property type="entry name" value="Vgr_OB-fold_dom_sf"/>
</dbReference>
<dbReference type="NCBIfam" id="TIGR01646">
    <property type="entry name" value="vgr_GE"/>
    <property type="match status" value="1"/>
</dbReference>
<dbReference type="NCBIfam" id="TIGR03361">
    <property type="entry name" value="VI_Rhs_Vgr"/>
    <property type="match status" value="1"/>
</dbReference>
<dbReference type="PANTHER" id="PTHR32305">
    <property type="match status" value="1"/>
</dbReference>
<dbReference type="PANTHER" id="PTHR32305:SF15">
    <property type="entry name" value="PROTEIN RHSA-RELATED"/>
    <property type="match status" value="1"/>
</dbReference>
<dbReference type="Pfam" id="PF22178">
    <property type="entry name" value="Gp5_trimer_C"/>
    <property type="match status" value="1"/>
</dbReference>
<dbReference type="Pfam" id="PF04717">
    <property type="entry name" value="Phage_base_V"/>
    <property type="match status" value="1"/>
</dbReference>
<dbReference type="Pfam" id="PF05954">
    <property type="entry name" value="Phage_GPD"/>
    <property type="match status" value="1"/>
</dbReference>
<dbReference type="SUPFAM" id="SSF69255">
    <property type="entry name" value="gp5 N-terminal domain-like"/>
    <property type="match status" value="1"/>
</dbReference>
<dbReference type="SUPFAM" id="SSF69349">
    <property type="entry name" value="Phage fibre proteins"/>
    <property type="match status" value="1"/>
</dbReference>
<dbReference type="SUPFAM" id="SSF69279">
    <property type="entry name" value="Phage tail proteins"/>
    <property type="match status" value="2"/>
</dbReference>
<organism>
    <name type="scientific">Pseudomonas aeruginosa (strain ATCC 15692 / DSM 22644 / CIP 104116 / JCM 14847 / LMG 12228 / 1C / PRS 101 / PAO1)</name>
    <dbReference type="NCBI Taxonomy" id="208964"/>
    <lineage>
        <taxon>Bacteria</taxon>
        <taxon>Pseudomonadati</taxon>
        <taxon>Pseudomonadota</taxon>
        <taxon>Gammaproteobacteria</taxon>
        <taxon>Pseudomonadales</taxon>
        <taxon>Pseudomonadaceae</taxon>
        <taxon>Pseudomonas</taxon>
    </lineage>
</organism>
<comment type="function">
    <text evidence="1 2 3 4">Part of the H1 type VI secretion system (H1-T6SS) specialized secretion system, which delivers several virulence factors in both prokaryotic and eukaryotic cells during infection (PubMed:21325275, PubMed:24794869). Forms the spike at the tip of the elongating tube formed by haemolysin co-regulated protein 1/Hcp1 (PubMed:26894531). Allows the delivery of the Tse6 toxin to target cells where it exerts its toxicity (PubMed:30177742).</text>
</comment>
<comment type="subunit">
    <text evidence="1 3 4">Forms homotrimers (PubMed:21325275). Part of the type VI secretion system (T6SS) (PubMed:26894531). Interacts with EagT6 and Tse6; these interactions are required for Tse6 loading onto VgrG1 (PubMed:30177742). Interacts with Hcp1 (PubMed:21325275).</text>
</comment>
<comment type="subcellular location">
    <subcellularLocation>
        <location evidence="1">Secreted</location>
    </subcellularLocation>
</comment>
<comment type="disruption phenotype">
    <text evidence="1 2">Deletion of vgrG1a shows residual type VI secretion (PubMed:21325275). However, simultaneous deletion of all three vgrG genes (vgrG1a, vgrG1b and vgrG1c) totally abrogates bacterial killing (PubMed:24794869).</text>
</comment>
<comment type="similarity">
    <text evidence="6">Belongs to the VgrG protein family.</text>
</comment>
<accession>Q9I741</accession>
<name>VGR1A_PSEAE</name>
<keyword id="KW-0002">3D-structure</keyword>
<keyword id="KW-1185">Reference proteome</keyword>
<keyword id="KW-0964">Secreted</keyword>
<reference key="1">
    <citation type="journal article" date="2000" name="Nature">
        <title>Complete genome sequence of Pseudomonas aeruginosa PAO1, an opportunistic pathogen.</title>
        <authorList>
            <person name="Stover C.K."/>
            <person name="Pham X.-Q.T."/>
            <person name="Erwin A.L."/>
            <person name="Mizoguchi S.D."/>
            <person name="Warrener P."/>
            <person name="Hickey M.J."/>
            <person name="Brinkman F.S.L."/>
            <person name="Hufnagle W.O."/>
            <person name="Kowalik D.J."/>
            <person name="Lagrou M."/>
            <person name="Garber R.L."/>
            <person name="Goltry L."/>
            <person name="Tolentino E."/>
            <person name="Westbrock-Wadman S."/>
            <person name="Yuan Y."/>
            <person name="Brody L.L."/>
            <person name="Coulter S.N."/>
            <person name="Folger K.R."/>
            <person name="Kas A."/>
            <person name="Larbig K."/>
            <person name="Lim R.M."/>
            <person name="Smith K.A."/>
            <person name="Spencer D.H."/>
            <person name="Wong G.K.-S."/>
            <person name="Wu Z."/>
            <person name="Paulsen I.T."/>
            <person name="Reizer J."/>
            <person name="Saier M.H. Jr."/>
            <person name="Hancock R.E.W."/>
            <person name="Lory S."/>
            <person name="Olson M.V."/>
        </authorList>
    </citation>
    <scope>NUCLEOTIDE SEQUENCE [LARGE SCALE GENOMIC DNA]</scope>
    <source>
        <strain>ATCC 15692 / DSM 22644 / CIP 104116 / JCM 14847 / LMG 12228 / 1C / PRS 101 / PAO1</strain>
    </source>
</reference>
<reference key="2">
    <citation type="journal article" date="2011" name="J. Biol. Chem.">
        <title>Type VI secretion system in Pseudomonas aeruginosa: secretion and multimerization of VgrG proteins.</title>
        <authorList>
            <person name="Hachani A."/>
            <person name="Lossi N.S."/>
            <person name="Hamilton A."/>
            <person name="Jones C."/>
            <person name="Bleves S."/>
            <person name="Albesa-Jove D."/>
            <person name="Filloux A."/>
        </authorList>
    </citation>
    <scope>SUBCELLULAR LOCATION</scope>
    <scope>SUBUNIT</scope>
    <scope>FUNCTION</scope>
    <scope>INTERACTION WITH HCP1</scope>
    <scope>DISRUPTION PHENOTYPE</scope>
    <source>
        <strain>ATCC 15692 / DSM 22644 / CIP 104116 / JCM 14847 / LMG 12228 / 1C / PRS 101 / PAO1</strain>
    </source>
</reference>
<reference key="3">
    <citation type="journal article" date="2014" name="J. Biol. Chem.">
        <title>The VgrG proteins are 'a la carte' delivery systems for bacterial type VI effectors.</title>
        <authorList>
            <person name="Hachani A."/>
            <person name="Allsopp L.P."/>
            <person name="Oduko Y."/>
            <person name="Filloux A."/>
        </authorList>
    </citation>
    <scope>FUNCTION</scope>
    <scope>DISRUPTION PHENOTYPE</scope>
    <source>
        <strain>PAK</strain>
    </source>
</reference>
<reference key="4">
    <citation type="journal article" date="2016" name="Acta Crystallogr.">
        <title>The structure of VgrG1 from Pseudomonas aeruginosa, the needle tip of the bacterial type VI secretion system.</title>
        <authorList>
            <person name="Spinola-Amilibia M."/>
            <person name="Davo-Siguero I."/>
            <person name="Ruiz F.M."/>
            <person name="Santillana E."/>
            <person name="Medrano F.J."/>
            <person name="Romero A."/>
        </authorList>
    </citation>
    <scope>FUNCTION</scope>
    <scope>SUBUNIT</scope>
    <source>
        <strain>ATCC 15692 / DSM 22644 / CIP 104116 / JCM 14847 / LMG 12228 / 1C / PRS 101 / PAO1</strain>
    </source>
</reference>
<reference evidence="7 8" key="5">
    <citation type="journal article" date="2018" name="Nat. Microbiol.">
        <title>Mechanism of loading and translocation of type VI secretion system effector Tse6.</title>
        <authorList>
            <person name="Quentin D."/>
            <person name="Ahmad S."/>
            <person name="Shanthamoorthy P."/>
            <person name="Mougous J.D."/>
            <person name="Whitney J.C."/>
            <person name="Raunser S."/>
        </authorList>
    </citation>
    <scope>STRUCTURE BY ELECTRON MICROSCOPY (3.25 ANGSTROMS)</scope>
    <scope>FUNCTION</scope>
    <scope>INTERACTION WITH TSE6 AND EAGT6</scope>
</reference>
<feature type="chain" id="PRO_0000448911" description="Type VI secretion system spike protein VgrG1a">
    <location>
        <begin position="1"/>
        <end position="643"/>
    </location>
</feature>
<feature type="strand" evidence="10">
    <location>
        <begin position="4"/>
        <end position="6"/>
    </location>
</feature>
<feature type="strand" evidence="11">
    <location>
        <begin position="7"/>
        <end position="10"/>
    </location>
</feature>
<feature type="strand" evidence="10">
    <location>
        <begin position="19"/>
        <end position="24"/>
    </location>
</feature>
<feature type="strand" evidence="10">
    <location>
        <begin position="33"/>
        <end position="43"/>
    </location>
</feature>
<feature type="strand" evidence="10">
    <location>
        <begin position="48"/>
        <end position="53"/>
    </location>
</feature>
<feature type="strand" evidence="11">
    <location>
        <begin position="55"/>
        <end position="61"/>
    </location>
</feature>
<feature type="helix" evidence="11">
    <location>
        <begin position="63"/>
        <end position="65"/>
    </location>
</feature>
<feature type="strand" evidence="10">
    <location>
        <begin position="73"/>
        <end position="79"/>
    </location>
</feature>
<feature type="strand" evidence="10">
    <location>
        <begin position="87"/>
        <end position="94"/>
    </location>
</feature>
<feature type="helix" evidence="10">
    <location>
        <begin position="98"/>
        <end position="102"/>
    </location>
</feature>
<feature type="strand" evidence="11">
    <location>
        <begin position="104"/>
        <end position="113"/>
    </location>
</feature>
<feature type="helix" evidence="10">
    <location>
        <begin position="114"/>
        <end position="120"/>
    </location>
</feature>
<feature type="strand" evidence="11">
    <location>
        <begin position="130"/>
        <end position="133"/>
    </location>
</feature>
<feature type="strand" evidence="9">
    <location>
        <begin position="140"/>
        <end position="146"/>
    </location>
</feature>
<feature type="strand" evidence="10">
    <location>
        <begin position="148"/>
        <end position="150"/>
    </location>
</feature>
<feature type="helix" evidence="10">
    <location>
        <begin position="151"/>
        <end position="159"/>
    </location>
</feature>
<feature type="strand" evidence="10">
    <location>
        <begin position="165"/>
        <end position="169"/>
    </location>
</feature>
<feature type="strand" evidence="10">
    <location>
        <begin position="176"/>
        <end position="180"/>
    </location>
</feature>
<feature type="helix" evidence="11">
    <location>
        <begin position="183"/>
        <end position="185"/>
    </location>
</feature>
<feature type="strand" evidence="11">
    <location>
        <begin position="193"/>
        <end position="197"/>
    </location>
</feature>
<feature type="turn" evidence="10">
    <location>
        <begin position="200"/>
        <end position="202"/>
    </location>
</feature>
<feature type="strand" evidence="11">
    <location>
        <begin position="206"/>
        <end position="208"/>
    </location>
</feature>
<feature type="strand" evidence="11">
    <location>
        <begin position="210"/>
        <end position="218"/>
    </location>
</feature>
<feature type="strand" evidence="10">
    <location>
        <begin position="223"/>
        <end position="225"/>
    </location>
</feature>
<feature type="strand" evidence="11">
    <location>
        <begin position="240"/>
        <end position="243"/>
    </location>
</feature>
<feature type="strand" evidence="11">
    <location>
        <begin position="247"/>
        <end position="250"/>
    </location>
</feature>
<feature type="strand" evidence="11">
    <location>
        <begin position="254"/>
        <end position="256"/>
    </location>
</feature>
<feature type="strand" evidence="10">
    <location>
        <begin position="263"/>
        <end position="265"/>
    </location>
</feature>
<feature type="turn" evidence="10">
    <location>
        <begin position="266"/>
        <end position="268"/>
    </location>
</feature>
<feature type="helix" evidence="10">
    <location>
        <begin position="269"/>
        <end position="272"/>
    </location>
</feature>
<feature type="turn" evidence="10">
    <location>
        <begin position="273"/>
        <end position="275"/>
    </location>
</feature>
<feature type="helix" evidence="10">
    <location>
        <begin position="277"/>
        <end position="280"/>
    </location>
</feature>
<feature type="turn" evidence="10">
    <location>
        <begin position="281"/>
        <end position="283"/>
    </location>
</feature>
<feature type="strand" evidence="9">
    <location>
        <begin position="284"/>
        <end position="290"/>
    </location>
</feature>
<feature type="strand" evidence="11">
    <location>
        <begin position="299"/>
        <end position="305"/>
    </location>
</feature>
<feature type="helix" evidence="11">
    <location>
        <begin position="309"/>
        <end position="311"/>
    </location>
</feature>
<feature type="strand" evidence="10">
    <location>
        <begin position="323"/>
        <end position="325"/>
    </location>
</feature>
<feature type="strand" evidence="11">
    <location>
        <begin position="339"/>
        <end position="348"/>
    </location>
</feature>
<feature type="strand" evidence="10">
    <location>
        <begin position="349"/>
        <end position="351"/>
    </location>
</feature>
<feature type="strand" evidence="10">
    <location>
        <begin position="368"/>
        <end position="373"/>
    </location>
</feature>
<feature type="strand" evidence="10">
    <location>
        <begin position="388"/>
        <end position="391"/>
    </location>
</feature>
<feature type="strand" evidence="10">
    <location>
        <begin position="400"/>
        <end position="402"/>
    </location>
</feature>
<feature type="strand" evidence="11">
    <location>
        <begin position="419"/>
        <end position="422"/>
    </location>
</feature>
<feature type="strand" evidence="10">
    <location>
        <begin position="430"/>
        <end position="435"/>
    </location>
</feature>
<feature type="helix" evidence="10">
    <location>
        <begin position="436"/>
        <end position="438"/>
    </location>
</feature>
<feature type="strand" evidence="10">
    <location>
        <begin position="442"/>
        <end position="448"/>
    </location>
</feature>
<feature type="strand" evidence="10">
    <location>
        <begin position="452"/>
        <end position="454"/>
    </location>
</feature>
<feature type="turn" evidence="10">
    <location>
        <begin position="460"/>
        <end position="462"/>
    </location>
</feature>
<feature type="strand" evidence="10">
    <location>
        <begin position="463"/>
        <end position="465"/>
    </location>
</feature>
<feature type="strand" evidence="10">
    <location>
        <begin position="467"/>
        <end position="470"/>
    </location>
</feature>
<feature type="strand" evidence="10">
    <location>
        <begin position="484"/>
        <end position="488"/>
    </location>
</feature>
<feature type="strand" evidence="10">
    <location>
        <begin position="495"/>
        <end position="499"/>
    </location>
</feature>
<feature type="strand" evidence="11">
    <location>
        <begin position="512"/>
        <end position="518"/>
    </location>
</feature>
<feature type="strand" evidence="11">
    <location>
        <begin position="520"/>
        <end position="526"/>
    </location>
</feature>
<feature type="strand" evidence="11">
    <location>
        <begin position="528"/>
        <end position="534"/>
    </location>
</feature>
<feature type="strand" evidence="11">
    <location>
        <begin position="536"/>
        <end position="542"/>
    </location>
</feature>
<feature type="strand" evidence="11">
    <location>
        <begin position="544"/>
        <end position="550"/>
    </location>
</feature>
<feature type="strand" evidence="10">
    <location>
        <begin position="565"/>
        <end position="572"/>
    </location>
</feature>
<feature type="strand" evidence="10">
    <location>
        <begin position="575"/>
        <end position="582"/>
    </location>
</feature>
<feature type="strand" evidence="10">
    <location>
        <begin position="585"/>
        <end position="588"/>
    </location>
</feature>
<feature type="strand" evidence="11">
    <location>
        <begin position="600"/>
        <end position="606"/>
    </location>
</feature>
<feature type="strand" evidence="11">
    <location>
        <begin position="608"/>
        <end position="613"/>
    </location>
</feature>
<feature type="turn" evidence="11">
    <location>
        <begin position="621"/>
        <end position="624"/>
    </location>
</feature>
<feature type="helix" evidence="10">
    <location>
        <begin position="626"/>
        <end position="636"/>
    </location>
</feature>
<protein>
    <recommendedName>
        <fullName evidence="5">Type VI secretion system spike protein VgrG1a</fullName>
    </recommendedName>
    <alternativeName>
        <fullName>T6SS spike protein VgrG1a</fullName>
    </alternativeName>
</protein>